<keyword id="KW-0030">Aminoacyl-tRNA synthetase</keyword>
<keyword id="KW-0067">ATP-binding</keyword>
<keyword id="KW-0963">Cytoplasm</keyword>
<keyword id="KW-0436">Ligase</keyword>
<keyword id="KW-0479">Metal-binding</keyword>
<keyword id="KW-0547">Nucleotide-binding</keyword>
<keyword id="KW-0648">Protein biosynthesis</keyword>
<keyword id="KW-1185">Reference proteome</keyword>
<keyword id="KW-0694">RNA-binding</keyword>
<keyword id="KW-0820">tRNA-binding</keyword>
<keyword id="KW-0862">Zinc</keyword>
<evidence type="ECO:0000255" key="1">
    <source>
        <dbReference type="HAMAP-Rule" id="MF_00184"/>
    </source>
</evidence>
<evidence type="ECO:0000255" key="2">
    <source>
        <dbReference type="PROSITE-ProRule" id="PRU01228"/>
    </source>
</evidence>
<dbReference type="EC" id="6.1.1.3" evidence="1"/>
<dbReference type="EMBL" id="CP001389">
    <property type="protein sequence ID" value="ACP25042.1"/>
    <property type="molecule type" value="Genomic_DNA"/>
</dbReference>
<dbReference type="RefSeq" id="WP_012707819.1">
    <property type="nucleotide sequence ID" value="NC_012587.1"/>
</dbReference>
<dbReference type="RefSeq" id="YP_002825795.1">
    <property type="nucleotide sequence ID" value="NC_012587.1"/>
</dbReference>
<dbReference type="SMR" id="C3MB49"/>
<dbReference type="STRING" id="394.NGR_c12610"/>
<dbReference type="KEGG" id="rhi:NGR_c12610"/>
<dbReference type="PATRIC" id="fig|394.7.peg.4080"/>
<dbReference type="eggNOG" id="COG0441">
    <property type="taxonomic scope" value="Bacteria"/>
</dbReference>
<dbReference type="HOGENOM" id="CLU_008554_0_1_5"/>
<dbReference type="OrthoDB" id="9802304at2"/>
<dbReference type="Proteomes" id="UP000001054">
    <property type="component" value="Chromosome"/>
</dbReference>
<dbReference type="GO" id="GO:0005829">
    <property type="term" value="C:cytosol"/>
    <property type="evidence" value="ECO:0007669"/>
    <property type="project" value="TreeGrafter"/>
</dbReference>
<dbReference type="GO" id="GO:0005524">
    <property type="term" value="F:ATP binding"/>
    <property type="evidence" value="ECO:0007669"/>
    <property type="project" value="UniProtKB-UniRule"/>
</dbReference>
<dbReference type="GO" id="GO:0046872">
    <property type="term" value="F:metal ion binding"/>
    <property type="evidence" value="ECO:0007669"/>
    <property type="project" value="UniProtKB-KW"/>
</dbReference>
<dbReference type="GO" id="GO:0004829">
    <property type="term" value="F:threonine-tRNA ligase activity"/>
    <property type="evidence" value="ECO:0007669"/>
    <property type="project" value="UniProtKB-UniRule"/>
</dbReference>
<dbReference type="GO" id="GO:0000049">
    <property type="term" value="F:tRNA binding"/>
    <property type="evidence" value="ECO:0007669"/>
    <property type="project" value="UniProtKB-KW"/>
</dbReference>
<dbReference type="GO" id="GO:0006435">
    <property type="term" value="P:threonyl-tRNA aminoacylation"/>
    <property type="evidence" value="ECO:0007669"/>
    <property type="project" value="UniProtKB-UniRule"/>
</dbReference>
<dbReference type="CDD" id="cd01667">
    <property type="entry name" value="TGS_ThrRS"/>
    <property type="match status" value="1"/>
</dbReference>
<dbReference type="CDD" id="cd00860">
    <property type="entry name" value="ThrRS_anticodon"/>
    <property type="match status" value="1"/>
</dbReference>
<dbReference type="CDD" id="cd00771">
    <property type="entry name" value="ThrRS_core"/>
    <property type="match status" value="1"/>
</dbReference>
<dbReference type="FunFam" id="3.10.20.30:FF:000005">
    <property type="entry name" value="Threonine--tRNA ligase"/>
    <property type="match status" value="1"/>
</dbReference>
<dbReference type="FunFam" id="3.30.54.20:FF:000002">
    <property type="entry name" value="Threonine--tRNA ligase"/>
    <property type="match status" value="1"/>
</dbReference>
<dbReference type="FunFam" id="3.30.930.10:FF:000002">
    <property type="entry name" value="Threonine--tRNA ligase"/>
    <property type="match status" value="1"/>
</dbReference>
<dbReference type="FunFam" id="3.40.50.800:FF:000001">
    <property type="entry name" value="Threonine--tRNA ligase"/>
    <property type="match status" value="1"/>
</dbReference>
<dbReference type="FunFam" id="3.30.980.10:FF:000005">
    <property type="entry name" value="Threonyl-tRNA synthetase, mitochondrial"/>
    <property type="match status" value="1"/>
</dbReference>
<dbReference type="Gene3D" id="3.10.20.30">
    <property type="match status" value="1"/>
</dbReference>
<dbReference type="Gene3D" id="3.30.54.20">
    <property type="match status" value="1"/>
</dbReference>
<dbReference type="Gene3D" id="3.40.50.800">
    <property type="entry name" value="Anticodon-binding domain"/>
    <property type="match status" value="1"/>
</dbReference>
<dbReference type="Gene3D" id="3.30.930.10">
    <property type="entry name" value="Bira Bifunctional Protein, Domain 2"/>
    <property type="match status" value="1"/>
</dbReference>
<dbReference type="Gene3D" id="3.30.980.10">
    <property type="entry name" value="Threonyl-trna Synthetase, Chain A, domain 2"/>
    <property type="match status" value="1"/>
</dbReference>
<dbReference type="HAMAP" id="MF_00184">
    <property type="entry name" value="Thr_tRNA_synth"/>
    <property type="match status" value="1"/>
</dbReference>
<dbReference type="InterPro" id="IPR002314">
    <property type="entry name" value="aa-tRNA-synt_IIb"/>
</dbReference>
<dbReference type="InterPro" id="IPR006195">
    <property type="entry name" value="aa-tRNA-synth_II"/>
</dbReference>
<dbReference type="InterPro" id="IPR045864">
    <property type="entry name" value="aa-tRNA-synth_II/BPL/LPL"/>
</dbReference>
<dbReference type="InterPro" id="IPR004154">
    <property type="entry name" value="Anticodon-bd"/>
</dbReference>
<dbReference type="InterPro" id="IPR036621">
    <property type="entry name" value="Anticodon-bd_dom_sf"/>
</dbReference>
<dbReference type="InterPro" id="IPR012675">
    <property type="entry name" value="Beta-grasp_dom_sf"/>
</dbReference>
<dbReference type="InterPro" id="IPR004095">
    <property type="entry name" value="TGS"/>
</dbReference>
<dbReference type="InterPro" id="IPR012676">
    <property type="entry name" value="TGS-like"/>
</dbReference>
<dbReference type="InterPro" id="IPR002320">
    <property type="entry name" value="Thr-tRNA-ligase_IIa"/>
</dbReference>
<dbReference type="InterPro" id="IPR018163">
    <property type="entry name" value="Thr/Ala-tRNA-synth_IIc_edit"/>
</dbReference>
<dbReference type="InterPro" id="IPR047246">
    <property type="entry name" value="ThrRS_anticodon"/>
</dbReference>
<dbReference type="InterPro" id="IPR033728">
    <property type="entry name" value="ThrRS_core"/>
</dbReference>
<dbReference type="InterPro" id="IPR012947">
    <property type="entry name" value="tRNA_SAD"/>
</dbReference>
<dbReference type="NCBIfam" id="TIGR00418">
    <property type="entry name" value="thrS"/>
    <property type="match status" value="1"/>
</dbReference>
<dbReference type="PANTHER" id="PTHR11451:SF44">
    <property type="entry name" value="THREONINE--TRNA LIGASE, CHLOROPLASTIC_MITOCHONDRIAL 2"/>
    <property type="match status" value="1"/>
</dbReference>
<dbReference type="PANTHER" id="PTHR11451">
    <property type="entry name" value="THREONINE-TRNA LIGASE"/>
    <property type="match status" value="1"/>
</dbReference>
<dbReference type="Pfam" id="PF03129">
    <property type="entry name" value="HGTP_anticodon"/>
    <property type="match status" value="1"/>
</dbReference>
<dbReference type="Pfam" id="PF02824">
    <property type="entry name" value="TGS"/>
    <property type="match status" value="1"/>
</dbReference>
<dbReference type="Pfam" id="PF00587">
    <property type="entry name" value="tRNA-synt_2b"/>
    <property type="match status" value="1"/>
</dbReference>
<dbReference type="Pfam" id="PF07973">
    <property type="entry name" value="tRNA_SAD"/>
    <property type="match status" value="1"/>
</dbReference>
<dbReference type="PRINTS" id="PR01047">
    <property type="entry name" value="TRNASYNTHTHR"/>
</dbReference>
<dbReference type="SMART" id="SM00863">
    <property type="entry name" value="tRNA_SAD"/>
    <property type="match status" value="1"/>
</dbReference>
<dbReference type="SUPFAM" id="SSF52954">
    <property type="entry name" value="Class II aaRS ABD-related"/>
    <property type="match status" value="1"/>
</dbReference>
<dbReference type="SUPFAM" id="SSF55681">
    <property type="entry name" value="Class II aaRS and biotin synthetases"/>
    <property type="match status" value="1"/>
</dbReference>
<dbReference type="SUPFAM" id="SSF81271">
    <property type="entry name" value="TGS-like"/>
    <property type="match status" value="1"/>
</dbReference>
<dbReference type="SUPFAM" id="SSF55186">
    <property type="entry name" value="ThrRS/AlaRS common domain"/>
    <property type="match status" value="1"/>
</dbReference>
<dbReference type="PROSITE" id="PS50862">
    <property type="entry name" value="AA_TRNA_LIGASE_II"/>
    <property type="match status" value="1"/>
</dbReference>
<dbReference type="PROSITE" id="PS51880">
    <property type="entry name" value="TGS"/>
    <property type="match status" value="1"/>
</dbReference>
<sequence length="661" mass="74774">MSHSVSLTFPDGSVREFAAGTTGRDVAESISKSLAKKAVAIALDGELRDLSDPIADGKIEIVTREDKRALELIRHDAAHVMAEAVQELWPGTQVTIGPVIDNGFYYDFAKNEPFTPDDLPVIEKKMKEIIARNNPFSKEVWSRDKAKEVFAAKGESYKVELVDAIPEGQDLKIYYQGDWFDLCRGPHMASTGQIGTAFKLMKVAGAYWRGDSNNPMLTRIYGTAWHTQEELDQYLHVLAEAEKRDHRRLGREMDLFHFQEEGPGVVFWHGKGWRVFQSLVAYMRRRLEVDYQEVNAPQVLDKSLWETSGHWGWYRDNMFKVTVAGDETDDDRVFALKPMNCPGHIQIFKHGLKSYRELPVRMAEFGAVHRYEPSGALHGLMRVRGFTQDDAHIFCTDEQMAAECLKINDLILSVYEDFGFKEIVVKLSTRPDKRVGSDALWDRAEAVMTDVLNTIEAQSEGRIKTGILPGEGAFYGPKFEYTLKDAIGREWQCGTTQVDFNLPERFGAFYIDKDSEKRQPVMIHRAICGSMERFLGILLENYAGHMPLWISPLQVVVATITSDADDYGREVAARLREAGLTVETDFRNEKINYKIREHSVTKVPVIVVCGKREAEERSVNIRRLGSQAQTAMSLEEAVAALSSEAMAPDLKRKMERSARAA</sequence>
<comment type="function">
    <text evidence="1">Catalyzes the attachment of threonine to tRNA(Thr) in a two-step reaction: L-threonine is first activated by ATP to form Thr-AMP and then transferred to the acceptor end of tRNA(Thr). Also edits incorrectly charged L-seryl-tRNA(Thr).</text>
</comment>
<comment type="catalytic activity">
    <reaction evidence="1">
        <text>tRNA(Thr) + L-threonine + ATP = L-threonyl-tRNA(Thr) + AMP + diphosphate + H(+)</text>
        <dbReference type="Rhea" id="RHEA:24624"/>
        <dbReference type="Rhea" id="RHEA-COMP:9670"/>
        <dbReference type="Rhea" id="RHEA-COMP:9704"/>
        <dbReference type="ChEBI" id="CHEBI:15378"/>
        <dbReference type="ChEBI" id="CHEBI:30616"/>
        <dbReference type="ChEBI" id="CHEBI:33019"/>
        <dbReference type="ChEBI" id="CHEBI:57926"/>
        <dbReference type="ChEBI" id="CHEBI:78442"/>
        <dbReference type="ChEBI" id="CHEBI:78534"/>
        <dbReference type="ChEBI" id="CHEBI:456215"/>
        <dbReference type="EC" id="6.1.1.3"/>
    </reaction>
</comment>
<comment type="cofactor">
    <cofactor evidence="1">
        <name>Zn(2+)</name>
        <dbReference type="ChEBI" id="CHEBI:29105"/>
    </cofactor>
    <text evidence="1">Binds 1 zinc ion per subunit.</text>
</comment>
<comment type="subunit">
    <text evidence="1">Homodimer.</text>
</comment>
<comment type="subcellular location">
    <subcellularLocation>
        <location evidence="1">Cytoplasm</location>
    </subcellularLocation>
</comment>
<comment type="similarity">
    <text evidence="1">Belongs to the class-II aminoacyl-tRNA synthetase family.</text>
</comment>
<gene>
    <name evidence="1" type="primary">thrS</name>
    <name type="ordered locus">NGR_c12610</name>
</gene>
<proteinExistence type="inferred from homology"/>
<feature type="chain" id="PRO_1000199562" description="Threonine--tRNA ligase">
    <location>
        <begin position="1"/>
        <end position="661"/>
    </location>
</feature>
<feature type="domain" description="TGS" evidence="2">
    <location>
        <begin position="1"/>
        <end position="64"/>
    </location>
</feature>
<feature type="region of interest" description="Catalytic" evidence="1">
    <location>
        <begin position="245"/>
        <end position="547"/>
    </location>
</feature>
<feature type="binding site" evidence="1">
    <location>
        <position position="341"/>
    </location>
    <ligand>
        <name>Zn(2+)</name>
        <dbReference type="ChEBI" id="CHEBI:29105"/>
    </ligand>
</feature>
<feature type="binding site" evidence="1">
    <location>
        <position position="392"/>
    </location>
    <ligand>
        <name>Zn(2+)</name>
        <dbReference type="ChEBI" id="CHEBI:29105"/>
    </ligand>
</feature>
<feature type="binding site" evidence="1">
    <location>
        <position position="524"/>
    </location>
    <ligand>
        <name>Zn(2+)</name>
        <dbReference type="ChEBI" id="CHEBI:29105"/>
    </ligand>
</feature>
<protein>
    <recommendedName>
        <fullName evidence="1">Threonine--tRNA ligase</fullName>
        <ecNumber evidence="1">6.1.1.3</ecNumber>
    </recommendedName>
    <alternativeName>
        <fullName evidence="1">Threonyl-tRNA synthetase</fullName>
        <shortName evidence="1">ThrRS</shortName>
    </alternativeName>
</protein>
<reference key="1">
    <citation type="journal article" date="2009" name="Appl. Environ. Microbiol.">
        <title>Rhizobium sp. strain NGR234 possesses a remarkable number of secretion systems.</title>
        <authorList>
            <person name="Schmeisser C."/>
            <person name="Liesegang H."/>
            <person name="Krysciak D."/>
            <person name="Bakkou N."/>
            <person name="Le Quere A."/>
            <person name="Wollherr A."/>
            <person name="Heinemeyer I."/>
            <person name="Morgenstern B."/>
            <person name="Pommerening-Roeser A."/>
            <person name="Flores M."/>
            <person name="Palacios R."/>
            <person name="Brenner S."/>
            <person name="Gottschalk G."/>
            <person name="Schmitz R.A."/>
            <person name="Broughton W.J."/>
            <person name="Perret X."/>
            <person name="Strittmatter A.W."/>
            <person name="Streit W.R."/>
        </authorList>
    </citation>
    <scope>NUCLEOTIDE SEQUENCE [LARGE SCALE GENOMIC DNA]</scope>
    <source>
        <strain>NBRC 101917 / NGR234</strain>
    </source>
</reference>
<name>SYT_SINFN</name>
<accession>C3MB49</accession>
<organism>
    <name type="scientific">Sinorhizobium fredii (strain NBRC 101917 / NGR234)</name>
    <dbReference type="NCBI Taxonomy" id="394"/>
    <lineage>
        <taxon>Bacteria</taxon>
        <taxon>Pseudomonadati</taxon>
        <taxon>Pseudomonadota</taxon>
        <taxon>Alphaproteobacteria</taxon>
        <taxon>Hyphomicrobiales</taxon>
        <taxon>Rhizobiaceae</taxon>
        <taxon>Sinorhizobium/Ensifer group</taxon>
        <taxon>Sinorhizobium</taxon>
    </lineage>
</organism>